<gene>
    <name evidence="9" type="primary">MEAK7</name>
    <name type="synonym">KIAA1609</name>
    <name type="synonym">TLDC1</name>
</gene>
<evidence type="ECO:0000255" key="1">
    <source>
        <dbReference type="PROSITE-ProRule" id="PRU01234"/>
    </source>
</evidence>
<evidence type="ECO:0000269" key="2">
    <source>
    </source>
</evidence>
<evidence type="ECO:0000269" key="3">
    <source>
    </source>
</evidence>
<evidence type="ECO:0000269" key="4">
    <source>
    </source>
</evidence>
<evidence type="ECO:0000269" key="5">
    <source>
    </source>
</evidence>
<evidence type="ECO:0000269" key="6">
    <source>
    </source>
</evidence>
<evidence type="ECO:0000269" key="7">
    <source ref="3"/>
</evidence>
<evidence type="ECO:0000305" key="8"/>
<evidence type="ECO:0000312" key="9">
    <source>
        <dbReference type="HGNC" id="HGNC:29325"/>
    </source>
</evidence>
<name>MEAK7_HUMAN</name>
<protein>
    <recommendedName>
        <fullName evidence="8">MTOR-associated protein MEAK7</fullName>
        <shortName evidence="8">MEAK7</shortName>
    </recommendedName>
    <alternativeName>
        <fullName evidence="9">MTOR associated protein, eak-7 homolog</fullName>
    </alternativeName>
    <alternativeName>
        <fullName>TBC/LysM-associated domain-containing protein 1</fullName>
    </alternativeName>
    <alternativeName>
        <fullName>TLD domain-containing protein 1</fullName>
    </alternativeName>
</protein>
<organism>
    <name type="scientific">Homo sapiens</name>
    <name type="common">Human</name>
    <dbReference type="NCBI Taxonomy" id="9606"/>
    <lineage>
        <taxon>Eukaryota</taxon>
        <taxon>Metazoa</taxon>
        <taxon>Chordata</taxon>
        <taxon>Craniata</taxon>
        <taxon>Vertebrata</taxon>
        <taxon>Euteleostomi</taxon>
        <taxon>Mammalia</taxon>
        <taxon>Eutheria</taxon>
        <taxon>Euarchontoglires</taxon>
        <taxon>Primates</taxon>
        <taxon>Haplorrhini</taxon>
        <taxon>Catarrhini</taxon>
        <taxon>Hominidae</taxon>
        <taxon>Homo</taxon>
    </lineage>
</organism>
<dbReference type="EMBL" id="AB046829">
    <property type="protein sequence ID" value="BAB13435.1"/>
    <property type="status" value="ALT_INIT"/>
    <property type="molecule type" value="mRNA"/>
</dbReference>
<dbReference type="EMBL" id="AC022165">
    <property type="status" value="NOT_ANNOTATED_CDS"/>
    <property type="molecule type" value="Genomic_DNA"/>
</dbReference>
<dbReference type="EMBL" id="CH471114">
    <property type="protein sequence ID" value="EAW95478.1"/>
    <property type="molecule type" value="Genomic_DNA"/>
</dbReference>
<dbReference type="EMBL" id="BC023251">
    <property type="protein sequence ID" value="AAH23251.1"/>
    <property type="molecule type" value="mRNA"/>
</dbReference>
<dbReference type="EMBL" id="BC060844">
    <property type="protein sequence ID" value="AAH60844.1"/>
    <property type="molecule type" value="mRNA"/>
</dbReference>
<dbReference type="EMBL" id="AL137316">
    <property type="protein sequence ID" value="CAB70693.1"/>
    <property type="molecule type" value="mRNA"/>
</dbReference>
<dbReference type="CCDS" id="CCDS32498.1"/>
<dbReference type="PIR" id="T46288">
    <property type="entry name" value="T46288"/>
</dbReference>
<dbReference type="RefSeq" id="NP_065998.3">
    <property type="nucleotide sequence ID" value="NM_020947.3"/>
</dbReference>
<dbReference type="RefSeq" id="XP_005256132.1">
    <property type="nucleotide sequence ID" value="XM_005256075.3"/>
</dbReference>
<dbReference type="RefSeq" id="XP_006721303.1">
    <property type="nucleotide sequence ID" value="XM_006721240.2"/>
</dbReference>
<dbReference type="RefSeq" id="XP_011521550.1">
    <property type="nucleotide sequence ID" value="XM_011523248.2"/>
</dbReference>
<dbReference type="RefSeq" id="XP_011521551.1">
    <property type="nucleotide sequence ID" value="XM_011523249.2"/>
</dbReference>
<dbReference type="RefSeq" id="XP_016878999.1">
    <property type="nucleotide sequence ID" value="XM_017023510.1"/>
</dbReference>
<dbReference type="RefSeq" id="XP_016879000.1">
    <property type="nucleotide sequence ID" value="XM_017023511.2"/>
</dbReference>
<dbReference type="RefSeq" id="XP_047290366.1">
    <property type="nucleotide sequence ID" value="XM_047434410.1"/>
</dbReference>
<dbReference type="PDB" id="7U4T">
    <property type="method" value="EM"/>
    <property type="resolution" value="3.60 A"/>
    <property type="chains" value="W=1-456"/>
</dbReference>
<dbReference type="PDBsum" id="7U4T"/>
<dbReference type="EMDB" id="EMD-26334"/>
<dbReference type="SMR" id="Q6P9B6"/>
<dbReference type="BioGRID" id="121731">
    <property type="interactions" value="48"/>
</dbReference>
<dbReference type="ELM" id="Q6P9B6"/>
<dbReference type="FunCoup" id="Q6P9B6">
    <property type="interactions" value="1681"/>
</dbReference>
<dbReference type="IntAct" id="Q6P9B6">
    <property type="interactions" value="16"/>
</dbReference>
<dbReference type="MINT" id="Q6P9B6"/>
<dbReference type="STRING" id="9606.ENSP00000343635"/>
<dbReference type="iPTMnet" id="Q6P9B6"/>
<dbReference type="MetOSite" id="Q6P9B6"/>
<dbReference type="PhosphoSitePlus" id="Q6P9B6"/>
<dbReference type="SwissPalm" id="Q6P9B6"/>
<dbReference type="BioMuta" id="TLDC1"/>
<dbReference type="DMDM" id="296434547"/>
<dbReference type="jPOST" id="Q6P9B6"/>
<dbReference type="MassIVE" id="Q6P9B6"/>
<dbReference type="PaxDb" id="9606-ENSP00000343635"/>
<dbReference type="PeptideAtlas" id="Q6P9B6"/>
<dbReference type="ProteomicsDB" id="67035"/>
<dbReference type="Pumba" id="Q6P9B6"/>
<dbReference type="Antibodypedia" id="48850">
    <property type="antibodies" value="230 antibodies from 18 providers"/>
</dbReference>
<dbReference type="DNASU" id="57707"/>
<dbReference type="Ensembl" id="ENST00000343629.11">
    <property type="protein sequence ID" value="ENSP00000343635.6"/>
    <property type="gene ID" value="ENSG00000140950.16"/>
</dbReference>
<dbReference type="GeneID" id="57707"/>
<dbReference type="KEGG" id="hsa:57707"/>
<dbReference type="MANE-Select" id="ENST00000343629.11">
    <property type="protein sequence ID" value="ENSP00000343635.6"/>
    <property type="RefSeq nucleotide sequence ID" value="NM_020947.4"/>
    <property type="RefSeq protein sequence ID" value="NP_065998.3"/>
</dbReference>
<dbReference type="UCSC" id="uc002fib.4">
    <property type="organism name" value="human"/>
</dbReference>
<dbReference type="AGR" id="HGNC:29325"/>
<dbReference type="CTD" id="57707"/>
<dbReference type="DisGeNET" id="57707"/>
<dbReference type="GeneCards" id="MEAK7"/>
<dbReference type="HGNC" id="HGNC:29325">
    <property type="gene designation" value="MEAK7"/>
</dbReference>
<dbReference type="HPA" id="ENSG00000140950">
    <property type="expression patterns" value="Low tissue specificity"/>
</dbReference>
<dbReference type="MIM" id="619331">
    <property type="type" value="gene"/>
</dbReference>
<dbReference type="neXtProt" id="NX_Q6P9B6"/>
<dbReference type="OpenTargets" id="ENSG00000140950"/>
<dbReference type="PharmGKB" id="PA144596416"/>
<dbReference type="VEuPathDB" id="HostDB:ENSG00000140950"/>
<dbReference type="eggNOG" id="KOG2557">
    <property type="taxonomic scope" value="Eukaryota"/>
</dbReference>
<dbReference type="GeneTree" id="ENSGT00940000158087"/>
<dbReference type="HOGENOM" id="CLU_036763_2_0_1"/>
<dbReference type="InParanoid" id="Q6P9B6"/>
<dbReference type="OMA" id="CGRITHR"/>
<dbReference type="OrthoDB" id="289228at2759"/>
<dbReference type="PAN-GO" id="Q6P9B6">
    <property type="GO annotations" value="1 GO annotation based on evolutionary models"/>
</dbReference>
<dbReference type="PhylomeDB" id="Q6P9B6"/>
<dbReference type="TreeFam" id="TF316541"/>
<dbReference type="PathwayCommons" id="Q6P9B6"/>
<dbReference type="SignaLink" id="Q6P9B6"/>
<dbReference type="BioGRID-ORCS" id="57707">
    <property type="hits" value="26 hits in 1156 CRISPR screens"/>
</dbReference>
<dbReference type="ChiTaRS" id="TLDC1">
    <property type="organism name" value="human"/>
</dbReference>
<dbReference type="GenomeRNAi" id="57707"/>
<dbReference type="Pharos" id="Q6P9B6">
    <property type="development level" value="Tdark"/>
</dbReference>
<dbReference type="PRO" id="PR:Q6P9B6"/>
<dbReference type="Proteomes" id="UP000005640">
    <property type="component" value="Chromosome 16"/>
</dbReference>
<dbReference type="RNAct" id="Q6P9B6">
    <property type="molecule type" value="protein"/>
</dbReference>
<dbReference type="Bgee" id="ENSG00000140950">
    <property type="expression patterns" value="Expressed in cervix squamous epithelium and 138 other cell types or tissues"/>
</dbReference>
<dbReference type="ExpressionAtlas" id="Q6P9B6">
    <property type="expression patterns" value="baseline and differential"/>
</dbReference>
<dbReference type="GO" id="GO:0005737">
    <property type="term" value="C:cytoplasm"/>
    <property type="evidence" value="ECO:0000314"/>
    <property type="project" value="UniProtKB"/>
</dbReference>
<dbReference type="GO" id="GO:0005829">
    <property type="term" value="C:cytosol"/>
    <property type="evidence" value="ECO:0000314"/>
    <property type="project" value="HPA"/>
</dbReference>
<dbReference type="GO" id="GO:0005765">
    <property type="term" value="C:lysosomal membrane"/>
    <property type="evidence" value="ECO:0000314"/>
    <property type="project" value="UniProtKB"/>
</dbReference>
<dbReference type="GO" id="GO:0016020">
    <property type="term" value="C:membrane"/>
    <property type="evidence" value="ECO:0000314"/>
    <property type="project" value="UniProtKB"/>
</dbReference>
<dbReference type="GO" id="GO:0005730">
    <property type="term" value="C:nucleolus"/>
    <property type="evidence" value="ECO:0000314"/>
    <property type="project" value="HPA"/>
</dbReference>
<dbReference type="GO" id="GO:0005654">
    <property type="term" value="C:nucleoplasm"/>
    <property type="evidence" value="ECO:0000314"/>
    <property type="project" value="HPA"/>
</dbReference>
<dbReference type="GO" id="GO:0005634">
    <property type="term" value="C:nucleus"/>
    <property type="evidence" value="ECO:0000318"/>
    <property type="project" value="GO_Central"/>
</dbReference>
<dbReference type="GO" id="GO:1900408">
    <property type="term" value="P:negative regulation of cellular response to oxidative stress"/>
    <property type="evidence" value="ECO:0007669"/>
    <property type="project" value="Ensembl"/>
</dbReference>
<dbReference type="GO" id="GO:0150032">
    <property type="term" value="P:positive regulation of protein localization to lysosome"/>
    <property type="evidence" value="ECO:0000314"/>
    <property type="project" value="UniProtKB"/>
</dbReference>
<dbReference type="GO" id="GO:0030334">
    <property type="term" value="P:regulation of cell migration"/>
    <property type="evidence" value="ECO:0000314"/>
    <property type="project" value="UniProtKB"/>
</dbReference>
<dbReference type="GO" id="GO:0042127">
    <property type="term" value="P:regulation of cell population proliferation"/>
    <property type="evidence" value="ECO:0000314"/>
    <property type="project" value="UniProtKB"/>
</dbReference>
<dbReference type="GO" id="GO:0043200">
    <property type="term" value="P:response to amino acid"/>
    <property type="evidence" value="ECO:0000314"/>
    <property type="project" value="UniProtKB"/>
</dbReference>
<dbReference type="GO" id="GO:0032868">
    <property type="term" value="P:response to insulin"/>
    <property type="evidence" value="ECO:0000314"/>
    <property type="project" value="UniProtKB"/>
</dbReference>
<dbReference type="GO" id="GO:0031667">
    <property type="term" value="P:response to nutrient levels"/>
    <property type="evidence" value="ECO:0000314"/>
    <property type="project" value="UniProtKB"/>
</dbReference>
<dbReference type="GO" id="GO:0006979">
    <property type="term" value="P:response to oxidative stress"/>
    <property type="evidence" value="ECO:0000318"/>
    <property type="project" value="GO_Central"/>
</dbReference>
<dbReference type="GO" id="GO:0031929">
    <property type="term" value="P:TOR signaling"/>
    <property type="evidence" value="ECO:0000315"/>
    <property type="project" value="UniProtKB"/>
</dbReference>
<dbReference type="InterPro" id="IPR006571">
    <property type="entry name" value="TLDc_dom"/>
</dbReference>
<dbReference type="PANTHER" id="PTHR23354:SF131">
    <property type="entry name" value="MTOR-ASSOCIATED PROTEIN MEAK7"/>
    <property type="match status" value="1"/>
</dbReference>
<dbReference type="PANTHER" id="PTHR23354">
    <property type="entry name" value="NUCLEOLAR PROTEIN 7/ESTROGEN RECEPTOR COACTIVATOR-RELATED"/>
    <property type="match status" value="1"/>
</dbReference>
<dbReference type="Pfam" id="PF07534">
    <property type="entry name" value="TLD"/>
    <property type="match status" value="1"/>
</dbReference>
<dbReference type="SMART" id="SM00584">
    <property type="entry name" value="TLDc"/>
    <property type="match status" value="1"/>
</dbReference>
<dbReference type="PROSITE" id="PS51886">
    <property type="entry name" value="TLDC"/>
    <property type="match status" value="1"/>
</dbReference>
<keyword id="KW-0002">3D-structure</keyword>
<keyword id="KW-0963">Cytoplasm</keyword>
<keyword id="KW-0449">Lipoprotein</keyword>
<keyword id="KW-0458">Lysosome</keyword>
<keyword id="KW-0472">Membrane</keyword>
<keyword id="KW-0519">Myristate</keyword>
<keyword id="KW-1267">Proteomics identification</keyword>
<keyword id="KW-1185">Reference proteome</keyword>
<sequence>MGNSRSRVGRSFCSQFLPEEQAEIDQLFDALSSDKNSPNVSSKSFSLKALQNHVGEALPPEMVTRLYDGMRRVDLTGKAKGPSENVSQEQFTASMSHLLKGNSEEKSLMIMKMISATEGPVKAREVQKFTEDLVGSVVHVLSHRQELRGWTGKEAPGPNPRVQVLAAQLLSDMKLQDGKRLLGPQWLDYDCDRAVIEDWVFRVPHVAIFLSVVICKGFLILCSSLDLTTLVPERQVDQGRGFESILDVLSVMYINAQLPREQRHRWCLLFSSELHGHSFSQLCGHITHRGPCVAVLEDHDKHVFGGFASCSWEVKPQFQGDNRCFLFSICPSMAVYTHTGYNDHYMYLNHGQQTIPNGLGMGGQHNYFGLWVDVDFGKGHSRAKPTCTTYNSPQLSAQENFQFDKMEVWAVGDPSEEQLAKGNKSILDADPEAQALLEISGHSRHSEGLREVPDDE</sequence>
<reference key="1">
    <citation type="journal article" date="2000" name="DNA Res.">
        <title>Prediction of the coding sequences of unidentified human genes. XVIII. The complete sequences of 100 new cDNA clones from brain which code for large proteins in vitro.</title>
        <authorList>
            <person name="Nagase T."/>
            <person name="Kikuno R."/>
            <person name="Nakayama M."/>
            <person name="Hirosawa M."/>
            <person name="Ohara O."/>
        </authorList>
    </citation>
    <scope>NUCLEOTIDE SEQUENCE [LARGE SCALE MRNA]</scope>
    <scope>VARIANTS GLU-172; VAL-220 AND ARG-267</scope>
    <source>
        <tissue>Brain</tissue>
    </source>
</reference>
<reference key="2">
    <citation type="journal article" date="2004" name="Nature">
        <title>The sequence and analysis of duplication-rich human chromosome 16.</title>
        <authorList>
            <person name="Martin J."/>
            <person name="Han C."/>
            <person name="Gordon L.A."/>
            <person name="Terry A."/>
            <person name="Prabhakar S."/>
            <person name="She X."/>
            <person name="Xie G."/>
            <person name="Hellsten U."/>
            <person name="Chan Y.M."/>
            <person name="Altherr M."/>
            <person name="Couronne O."/>
            <person name="Aerts A."/>
            <person name="Bajorek E."/>
            <person name="Black S."/>
            <person name="Blumer H."/>
            <person name="Branscomb E."/>
            <person name="Brown N.C."/>
            <person name="Bruno W.J."/>
            <person name="Buckingham J.M."/>
            <person name="Callen D.F."/>
            <person name="Campbell C.S."/>
            <person name="Campbell M.L."/>
            <person name="Campbell E.W."/>
            <person name="Caoile C."/>
            <person name="Challacombe J.F."/>
            <person name="Chasteen L.A."/>
            <person name="Chertkov O."/>
            <person name="Chi H.C."/>
            <person name="Christensen M."/>
            <person name="Clark L.M."/>
            <person name="Cohn J.D."/>
            <person name="Denys M."/>
            <person name="Detter J.C."/>
            <person name="Dickson M."/>
            <person name="Dimitrijevic-Bussod M."/>
            <person name="Escobar J."/>
            <person name="Fawcett J.J."/>
            <person name="Flowers D."/>
            <person name="Fotopulos D."/>
            <person name="Glavina T."/>
            <person name="Gomez M."/>
            <person name="Gonzales E."/>
            <person name="Goodstein D."/>
            <person name="Goodwin L.A."/>
            <person name="Grady D.L."/>
            <person name="Grigoriev I."/>
            <person name="Groza M."/>
            <person name="Hammon N."/>
            <person name="Hawkins T."/>
            <person name="Haydu L."/>
            <person name="Hildebrand C.E."/>
            <person name="Huang W."/>
            <person name="Israni S."/>
            <person name="Jett J."/>
            <person name="Jewett P.B."/>
            <person name="Kadner K."/>
            <person name="Kimball H."/>
            <person name="Kobayashi A."/>
            <person name="Krawczyk M.-C."/>
            <person name="Leyba T."/>
            <person name="Longmire J.L."/>
            <person name="Lopez F."/>
            <person name="Lou Y."/>
            <person name="Lowry S."/>
            <person name="Ludeman T."/>
            <person name="Manohar C.F."/>
            <person name="Mark G.A."/>
            <person name="McMurray K.L."/>
            <person name="Meincke L.J."/>
            <person name="Morgan J."/>
            <person name="Moyzis R.K."/>
            <person name="Mundt M.O."/>
            <person name="Munk A.C."/>
            <person name="Nandkeshwar R.D."/>
            <person name="Pitluck S."/>
            <person name="Pollard M."/>
            <person name="Predki P."/>
            <person name="Parson-Quintana B."/>
            <person name="Ramirez L."/>
            <person name="Rash S."/>
            <person name="Retterer J."/>
            <person name="Ricke D.O."/>
            <person name="Robinson D.L."/>
            <person name="Rodriguez A."/>
            <person name="Salamov A."/>
            <person name="Saunders E.H."/>
            <person name="Scott D."/>
            <person name="Shough T."/>
            <person name="Stallings R.L."/>
            <person name="Stalvey M."/>
            <person name="Sutherland R.D."/>
            <person name="Tapia R."/>
            <person name="Tesmer J.G."/>
            <person name="Thayer N."/>
            <person name="Thompson L.S."/>
            <person name="Tice H."/>
            <person name="Torney D.C."/>
            <person name="Tran-Gyamfi M."/>
            <person name="Tsai M."/>
            <person name="Ulanovsky L.E."/>
            <person name="Ustaszewska A."/>
            <person name="Vo N."/>
            <person name="White P.S."/>
            <person name="Williams A.L."/>
            <person name="Wills P.L."/>
            <person name="Wu J.-R."/>
            <person name="Wu K."/>
            <person name="Yang J."/>
            <person name="DeJong P."/>
            <person name="Bruce D."/>
            <person name="Doggett N.A."/>
            <person name="Deaven L."/>
            <person name="Schmutz J."/>
            <person name="Grimwood J."/>
            <person name="Richardson P."/>
            <person name="Rokhsar D.S."/>
            <person name="Eichler E.E."/>
            <person name="Gilna P."/>
            <person name="Lucas S.M."/>
            <person name="Myers R.M."/>
            <person name="Rubin E.M."/>
            <person name="Pennacchio L.A."/>
        </authorList>
    </citation>
    <scope>NUCLEOTIDE SEQUENCE [LARGE SCALE GENOMIC DNA]</scope>
</reference>
<reference key="3">
    <citation type="submission" date="2005-09" db="EMBL/GenBank/DDBJ databases">
        <authorList>
            <person name="Mural R.J."/>
            <person name="Istrail S."/>
            <person name="Sutton G.G."/>
            <person name="Florea L."/>
            <person name="Halpern A.L."/>
            <person name="Mobarry C.M."/>
            <person name="Lippert R."/>
            <person name="Walenz B."/>
            <person name="Shatkay H."/>
            <person name="Dew I."/>
            <person name="Miller J.R."/>
            <person name="Flanigan M.J."/>
            <person name="Edwards N.J."/>
            <person name="Bolanos R."/>
            <person name="Fasulo D."/>
            <person name="Halldorsson B.V."/>
            <person name="Hannenhalli S."/>
            <person name="Turner R."/>
            <person name="Yooseph S."/>
            <person name="Lu F."/>
            <person name="Nusskern D.R."/>
            <person name="Shue B.C."/>
            <person name="Zheng X.H."/>
            <person name="Zhong F."/>
            <person name="Delcher A.L."/>
            <person name="Huson D.H."/>
            <person name="Kravitz S.A."/>
            <person name="Mouchard L."/>
            <person name="Reinert K."/>
            <person name="Remington K.A."/>
            <person name="Clark A.G."/>
            <person name="Waterman M.S."/>
            <person name="Eichler E.E."/>
            <person name="Adams M.D."/>
            <person name="Hunkapiller M.W."/>
            <person name="Myers E.W."/>
            <person name="Venter J.C."/>
        </authorList>
    </citation>
    <scope>NUCLEOTIDE SEQUENCE [LARGE SCALE GENOMIC DNA]</scope>
    <scope>VARIANTS VAL-220 AND ARG-267</scope>
</reference>
<reference key="4">
    <citation type="journal article" date="2004" name="Genome Res.">
        <title>The status, quality, and expansion of the NIH full-length cDNA project: the Mammalian Gene Collection (MGC).</title>
        <authorList>
            <consortium name="The MGC Project Team"/>
        </authorList>
    </citation>
    <scope>NUCLEOTIDE SEQUENCE [LARGE SCALE MRNA]</scope>
    <scope>VARIANTS GLU-172; VAL-220 AND ARG-267</scope>
    <source>
        <tissue>Kidney</tissue>
        <tissue>Placenta</tissue>
    </source>
</reference>
<reference key="5">
    <citation type="journal article" date="2007" name="BMC Genomics">
        <title>The full-ORF clone resource of the German cDNA consortium.</title>
        <authorList>
            <person name="Bechtel S."/>
            <person name="Rosenfelder H."/>
            <person name="Duda A."/>
            <person name="Schmidt C.P."/>
            <person name="Ernst U."/>
            <person name="Wellenreuther R."/>
            <person name="Mehrle A."/>
            <person name="Schuster C."/>
            <person name="Bahr A."/>
            <person name="Bloecker H."/>
            <person name="Heubner D."/>
            <person name="Hoerlein A."/>
            <person name="Michel G."/>
            <person name="Wedler H."/>
            <person name="Koehrer K."/>
            <person name="Ottenwaelder B."/>
            <person name="Poustka A."/>
            <person name="Wiemann S."/>
            <person name="Schupp I."/>
        </authorList>
    </citation>
    <scope>NUCLEOTIDE SEQUENCE [LARGE SCALE MRNA] OF 343-456</scope>
    <source>
        <tissue>Mammary cancer</tissue>
    </source>
</reference>
<reference key="6">
    <citation type="journal article" date="2010" name="Proteomics">
        <title>Strategy for comprehensive identification of human N-myristoylated proteins using an insect cell-free protein synthesis system.</title>
        <authorList>
            <person name="Suzuki T."/>
            <person name="Moriya K."/>
            <person name="Nagatoshi K."/>
            <person name="Ota Y."/>
            <person name="Ezure T."/>
            <person name="Ando E."/>
            <person name="Tsunasawa S."/>
            <person name="Utsumi T."/>
        </authorList>
    </citation>
    <scope>MYRISTOYLATION AT GLY-2</scope>
</reference>
<reference key="7">
    <citation type="journal article" date="2011" name="BMC Syst. Biol.">
        <title>Initial characterization of the human central proteome.</title>
        <authorList>
            <person name="Burkard T.R."/>
            <person name="Planyavsky M."/>
            <person name="Kaupe I."/>
            <person name="Breitwieser F.P."/>
            <person name="Buerckstuemmer T."/>
            <person name="Bennett K.L."/>
            <person name="Superti-Furga G."/>
            <person name="Colinge J."/>
        </authorList>
    </citation>
    <scope>IDENTIFICATION BY MASS SPECTROMETRY [LARGE SCALE ANALYSIS]</scope>
</reference>
<reference key="8">
    <citation type="journal article" date="2013" name="PLoS ONE">
        <title>Protein N-myristoylation plays a critical role in the endoplasmic reticulum morphological change induced by overexpression of protein Lunapark, an integral membrane protein of the endoplasmic reticulum.</title>
        <authorList>
            <person name="Moriya K."/>
            <person name="Nagatoshi K."/>
            <person name="Noriyasu Y."/>
            <person name="Okamura T."/>
            <person name="Takamitsu E."/>
            <person name="Suzuki T."/>
            <person name="Utsumi T."/>
        </authorList>
    </citation>
    <scope>MYRISTOYLATION AT GLY-2</scope>
    <scope>SUBCELLULAR LOCATION</scope>
</reference>
<reference key="9">
    <citation type="journal article" date="2018" name="Sci. Adv.">
        <title>Mammalian EAK-7 activates alternative mTOR signaling to regulate cell proliferation and migration.</title>
        <authorList>
            <person name="Nguyen J.T."/>
            <person name="Ray C."/>
            <person name="Fox A.L."/>
            <person name="Mendonca D.B."/>
            <person name="Kim J.K."/>
            <person name="Krebsbach P.H."/>
        </authorList>
    </citation>
    <scope>FUNCTION</scope>
    <scope>SUBCELLULAR LOCATION</scope>
    <scope>INTERACTION WITH MTOR AND MLST8</scope>
    <scope>INDUCTION BY NUTRIENTS</scope>
    <scope>MUTAGENESIS OF GLY-2</scope>
</reference>
<comment type="function">
    <text evidence="6">Activates an alternative mTOR signaling through RPS6KB2 activation and EIF4EBP1 repression to regulate cell proliferation and migration (PubMed:29750193). Recruits MTOR at the lysosome, essential for MTOR signaling at the lysosome (PubMed:29750193).</text>
</comment>
<comment type="subunit">
    <text evidence="6">Interacts (via C-terminal domain) with MTOR and MLST8; the interaction with MTOR increases upon nutrient stimulation.</text>
</comment>
<comment type="interaction">
    <interactant intactId="EBI-746504">
        <id>Q6P9B6</id>
    </interactant>
    <interactant intactId="EBI-358993">
        <id>Q15645</id>
        <label>TRIP13</label>
    </interactant>
    <organismsDiffer>false</organismsDiffer>
    <experiments>4</experiments>
</comment>
<comment type="subcellular location">
    <subcellularLocation>
        <location evidence="5">Membrane</location>
    </subcellularLocation>
    <subcellularLocation>
        <location evidence="5">Cytoplasm</location>
    </subcellularLocation>
    <subcellularLocation>
        <location evidence="6">Lysosome</location>
    </subcellularLocation>
</comment>
<comment type="induction">
    <text evidence="6">Addition of nutrients and insulin induces its expression (at protein level).</text>
</comment>
<comment type="sequence caution" evidence="8">
    <conflict type="erroneous initiation">
        <sequence resource="EMBL-CDS" id="BAB13435"/>
    </conflict>
    <text>Extended N-terminus.</text>
</comment>
<accession>Q6P9B6</accession>
<accession>Q8IZ64</accession>
<accession>Q9HCG3</accession>
<accession>Q9NTE8</accession>
<proteinExistence type="evidence at protein level"/>
<feature type="initiator methionine" description="Removed">
    <location>
        <position position="1"/>
    </location>
</feature>
<feature type="chain" id="PRO_0000313640" description="MTOR-associated protein MEAK7">
    <location>
        <begin position="2"/>
        <end position="456"/>
    </location>
</feature>
<feature type="domain" description="TLDc" evidence="1">
    <location>
        <begin position="244"/>
        <end position="412"/>
    </location>
</feature>
<feature type="lipid moiety-binding region" description="N-myristoyl glycine" evidence="4 5">
    <location>
        <position position="2"/>
    </location>
</feature>
<feature type="sequence variant" id="VAR_037675" description="In dbSNP:rs8046813.">
    <original>R</original>
    <variation>L</variation>
    <location>
        <position position="10"/>
    </location>
</feature>
<feature type="sequence variant" id="VAR_037676" description="In dbSNP:rs8055536.">
    <original>H</original>
    <variation>Q</variation>
    <location>
        <position position="97"/>
    </location>
</feature>
<feature type="sequence variant" id="VAR_037677" description="In dbSNP:rs436278." evidence="2 3">
    <original>D</original>
    <variation>E</variation>
    <location>
        <position position="172"/>
    </location>
</feature>
<feature type="sequence variant" id="VAR_037678" description="In dbSNP:rs431818." evidence="2 3 7">
    <original>I</original>
    <variation>V</variation>
    <location>
        <position position="220"/>
    </location>
</feature>
<feature type="sequence variant" id="VAR_037679" description="In dbSNP:rs34244563.">
    <original>E</original>
    <variation>D</variation>
    <location>
        <position position="233"/>
    </location>
</feature>
<feature type="sequence variant" id="VAR_037680" description="In dbSNP:rs422145." evidence="2 3 7">
    <original>C</original>
    <variation>R</variation>
    <location>
        <position position="267"/>
    </location>
</feature>
<feature type="sequence variant" id="VAR_037681" description="In dbSNP:rs34628943.">
    <original>S</original>
    <variation>L</variation>
    <location>
        <position position="443"/>
    </location>
</feature>
<feature type="mutagenesis site" description="Abolishes lysosomal location." evidence="6">
    <original>G</original>
    <variation>A</variation>
    <location>
        <position position="2"/>
    </location>
</feature>